<proteinExistence type="inferred from homology"/>
<keyword id="KW-0285">Flavoprotein</keyword>
<keyword id="KW-0288">FMN</keyword>
<keyword id="KW-0503">Monooxygenase</keyword>
<keyword id="KW-0521">NADP</keyword>
<keyword id="KW-0560">Oxidoreductase</keyword>
<keyword id="KW-1185">Reference proteome</keyword>
<comment type="function">
    <text evidence="1">Catalyzes the pyrimidine ring opening between N-3 and C-4 by an unusual flavin hydroperoxide-catalyzed mechanism, adding oxygen atoms in the process to yield ureidoacrylate peracid, that immediately reacts with FMN forming ureidoacrylate and FMN-N(5)-oxide. The FMN-N(5)-oxide reacts spontaneously with NADH to produce FMN. Requires the flavin reductase RutF to regenerate FMN in vivo.</text>
</comment>
<comment type="catalytic activity">
    <reaction evidence="1">
        <text>uracil + FMNH2 + NADH + O2 = (Z)-3-ureidoacrylate + FMN + NAD(+) + H2O + H(+)</text>
        <dbReference type="Rhea" id="RHEA:31587"/>
        <dbReference type="ChEBI" id="CHEBI:15377"/>
        <dbReference type="ChEBI" id="CHEBI:15378"/>
        <dbReference type="ChEBI" id="CHEBI:15379"/>
        <dbReference type="ChEBI" id="CHEBI:17568"/>
        <dbReference type="ChEBI" id="CHEBI:57540"/>
        <dbReference type="ChEBI" id="CHEBI:57618"/>
        <dbReference type="ChEBI" id="CHEBI:57945"/>
        <dbReference type="ChEBI" id="CHEBI:58210"/>
        <dbReference type="ChEBI" id="CHEBI:59891"/>
        <dbReference type="EC" id="1.14.99.46"/>
    </reaction>
</comment>
<comment type="catalytic activity">
    <reaction evidence="1">
        <text>thymine + FMNH2 + NADH + O2 = (Z)-2-methylureidoacrylate + FMN + NAD(+) + H2O + H(+)</text>
        <dbReference type="Rhea" id="RHEA:31599"/>
        <dbReference type="ChEBI" id="CHEBI:15377"/>
        <dbReference type="ChEBI" id="CHEBI:15378"/>
        <dbReference type="ChEBI" id="CHEBI:15379"/>
        <dbReference type="ChEBI" id="CHEBI:17821"/>
        <dbReference type="ChEBI" id="CHEBI:57540"/>
        <dbReference type="ChEBI" id="CHEBI:57618"/>
        <dbReference type="ChEBI" id="CHEBI:57945"/>
        <dbReference type="ChEBI" id="CHEBI:58210"/>
        <dbReference type="ChEBI" id="CHEBI:143783"/>
        <dbReference type="EC" id="1.14.99.46"/>
    </reaction>
</comment>
<comment type="induction">
    <text evidence="1">Up-regulated by the nitrogen regulatory protein C (NtrC also called GlnG) and repressed by RutR.</text>
</comment>
<comment type="similarity">
    <text evidence="1">Belongs to the NtaA/SnaA/DszA monooxygenase family. RutA subfamily.</text>
</comment>
<feature type="chain" id="PRO_0000402640" description="Pyrimidine monooxygenase RutA">
    <location>
        <begin position="1"/>
        <end position="382"/>
    </location>
</feature>
<feature type="binding site" evidence="1">
    <location>
        <begin position="68"/>
        <end position="69"/>
    </location>
    <ligand>
        <name>FMN</name>
        <dbReference type="ChEBI" id="CHEBI:58210"/>
    </ligand>
</feature>
<feature type="binding site" evidence="1">
    <location>
        <position position="134"/>
    </location>
    <ligand>
        <name>FMN</name>
        <dbReference type="ChEBI" id="CHEBI:58210"/>
    </ligand>
</feature>
<feature type="binding site" evidence="1">
    <location>
        <position position="143"/>
    </location>
    <ligand>
        <name>FMN</name>
        <dbReference type="ChEBI" id="CHEBI:58210"/>
    </ligand>
</feature>
<feature type="binding site" evidence="1">
    <location>
        <begin position="159"/>
        <end position="160"/>
    </location>
    <ligand>
        <name>FMN</name>
        <dbReference type="ChEBI" id="CHEBI:58210"/>
    </ligand>
</feature>
<feature type="binding site" evidence="1">
    <location>
        <position position="209"/>
    </location>
    <ligand>
        <name>FMN</name>
        <dbReference type="ChEBI" id="CHEBI:58210"/>
    </ligand>
</feature>
<dbReference type="EC" id="1.14.99.46" evidence="1"/>
<dbReference type="EMBL" id="AE005674">
    <property type="protein sequence ID" value="AAN42641.2"/>
    <property type="molecule type" value="Genomic_DNA"/>
</dbReference>
<dbReference type="EMBL" id="AE014073">
    <property type="protein sequence ID" value="AAP16526.1"/>
    <property type="molecule type" value="Genomic_DNA"/>
</dbReference>
<dbReference type="RefSeq" id="NP_706934.2">
    <property type="nucleotide sequence ID" value="NC_004337.2"/>
</dbReference>
<dbReference type="SMR" id="Q83LK6"/>
<dbReference type="STRING" id="198214.SF1015"/>
<dbReference type="PaxDb" id="198214-SF1015"/>
<dbReference type="GeneID" id="1023976"/>
<dbReference type="KEGG" id="sfl:SF1015"/>
<dbReference type="KEGG" id="sfx:S1085"/>
<dbReference type="PATRIC" id="fig|198214.7.peg.1179"/>
<dbReference type="HOGENOM" id="CLU_027853_1_1_6"/>
<dbReference type="Proteomes" id="UP000001006">
    <property type="component" value="Chromosome"/>
</dbReference>
<dbReference type="Proteomes" id="UP000002673">
    <property type="component" value="Chromosome"/>
</dbReference>
<dbReference type="GO" id="GO:0008726">
    <property type="term" value="F:alkanesulfonate monooxygenase activity"/>
    <property type="evidence" value="ECO:0007669"/>
    <property type="project" value="TreeGrafter"/>
</dbReference>
<dbReference type="GO" id="GO:0052614">
    <property type="term" value="F:uracil oxygenase activity"/>
    <property type="evidence" value="ECO:0007669"/>
    <property type="project" value="UniProtKB-EC"/>
</dbReference>
<dbReference type="GO" id="GO:0046306">
    <property type="term" value="P:alkanesulfonate catabolic process"/>
    <property type="evidence" value="ECO:0007669"/>
    <property type="project" value="TreeGrafter"/>
</dbReference>
<dbReference type="GO" id="GO:0019740">
    <property type="term" value="P:nitrogen utilization"/>
    <property type="evidence" value="ECO:0007669"/>
    <property type="project" value="UniProtKB-UniRule"/>
</dbReference>
<dbReference type="GO" id="GO:0006212">
    <property type="term" value="P:uracil catabolic process"/>
    <property type="evidence" value="ECO:0007669"/>
    <property type="project" value="UniProtKB-UniRule"/>
</dbReference>
<dbReference type="CDD" id="cd01094">
    <property type="entry name" value="Alkanesulfonate_monoxygenase"/>
    <property type="match status" value="1"/>
</dbReference>
<dbReference type="FunFam" id="3.20.20.30:FF:000003">
    <property type="entry name" value="Pyrimidine monooxygenase RutA"/>
    <property type="match status" value="1"/>
</dbReference>
<dbReference type="Gene3D" id="3.20.20.30">
    <property type="entry name" value="Luciferase-like domain"/>
    <property type="match status" value="1"/>
</dbReference>
<dbReference type="HAMAP" id="MF_01699">
    <property type="entry name" value="RutA"/>
    <property type="match status" value="1"/>
</dbReference>
<dbReference type="InterPro" id="IPR011251">
    <property type="entry name" value="Luciferase-like_dom"/>
</dbReference>
<dbReference type="InterPro" id="IPR036661">
    <property type="entry name" value="Luciferase-like_sf"/>
</dbReference>
<dbReference type="InterPro" id="IPR019914">
    <property type="entry name" value="Pyrimidine_monooxygenase_RutA"/>
</dbReference>
<dbReference type="InterPro" id="IPR050172">
    <property type="entry name" value="SsuD_RutA_monooxygenase"/>
</dbReference>
<dbReference type="NCBIfam" id="TIGR03612">
    <property type="entry name" value="RutA"/>
    <property type="match status" value="1"/>
</dbReference>
<dbReference type="PANTHER" id="PTHR42847">
    <property type="entry name" value="ALKANESULFONATE MONOOXYGENASE"/>
    <property type="match status" value="1"/>
</dbReference>
<dbReference type="PANTHER" id="PTHR42847:SF4">
    <property type="entry name" value="ALKANESULFONATE MONOOXYGENASE-RELATED"/>
    <property type="match status" value="1"/>
</dbReference>
<dbReference type="Pfam" id="PF00296">
    <property type="entry name" value="Bac_luciferase"/>
    <property type="match status" value="1"/>
</dbReference>
<dbReference type="SUPFAM" id="SSF51679">
    <property type="entry name" value="Bacterial luciferase-like"/>
    <property type="match status" value="1"/>
</dbReference>
<gene>
    <name evidence="1" type="primary">rutA</name>
    <name type="ordered locus">SF1015</name>
    <name type="ordered locus">S1085</name>
</gene>
<protein>
    <recommendedName>
        <fullName evidence="1">Pyrimidine monooxygenase RutA</fullName>
        <ecNumber evidence="1">1.14.99.46</ecNumber>
    </recommendedName>
</protein>
<evidence type="ECO:0000255" key="1">
    <source>
        <dbReference type="HAMAP-Rule" id="MF_01699"/>
    </source>
</evidence>
<name>RUTA_SHIFL</name>
<accession>Q83LK6</accession>
<accession>Q7UCZ8</accession>
<reference key="1">
    <citation type="journal article" date="2002" name="Nucleic Acids Res.">
        <title>Genome sequence of Shigella flexneri 2a: insights into pathogenicity through comparison with genomes of Escherichia coli K12 and O157.</title>
        <authorList>
            <person name="Jin Q."/>
            <person name="Yuan Z."/>
            <person name="Xu J."/>
            <person name="Wang Y."/>
            <person name="Shen Y."/>
            <person name="Lu W."/>
            <person name="Wang J."/>
            <person name="Liu H."/>
            <person name="Yang J."/>
            <person name="Yang F."/>
            <person name="Zhang X."/>
            <person name="Zhang J."/>
            <person name="Yang G."/>
            <person name="Wu H."/>
            <person name="Qu D."/>
            <person name="Dong J."/>
            <person name="Sun L."/>
            <person name="Xue Y."/>
            <person name="Zhao A."/>
            <person name="Gao Y."/>
            <person name="Zhu J."/>
            <person name="Kan B."/>
            <person name="Ding K."/>
            <person name="Chen S."/>
            <person name="Cheng H."/>
            <person name="Yao Z."/>
            <person name="He B."/>
            <person name="Chen R."/>
            <person name="Ma D."/>
            <person name="Qiang B."/>
            <person name="Wen Y."/>
            <person name="Hou Y."/>
            <person name="Yu J."/>
        </authorList>
    </citation>
    <scope>NUCLEOTIDE SEQUENCE [LARGE SCALE GENOMIC DNA]</scope>
    <source>
        <strain>301 / Serotype 2a</strain>
    </source>
</reference>
<reference key="2">
    <citation type="journal article" date="2003" name="Infect. Immun.">
        <title>Complete genome sequence and comparative genomics of Shigella flexneri serotype 2a strain 2457T.</title>
        <authorList>
            <person name="Wei J."/>
            <person name="Goldberg M.B."/>
            <person name="Burland V."/>
            <person name="Venkatesan M.M."/>
            <person name="Deng W."/>
            <person name="Fournier G."/>
            <person name="Mayhew G.F."/>
            <person name="Plunkett G. III"/>
            <person name="Rose D.J."/>
            <person name="Darling A."/>
            <person name="Mau B."/>
            <person name="Perna N.T."/>
            <person name="Payne S.M."/>
            <person name="Runyen-Janecky L.J."/>
            <person name="Zhou S."/>
            <person name="Schwartz D.C."/>
            <person name="Blattner F.R."/>
        </authorList>
    </citation>
    <scope>NUCLEOTIDE SEQUENCE [LARGE SCALE GENOMIC DNA]</scope>
    <source>
        <strain>ATCC 700930 / 2457T / Serotype 2a</strain>
    </source>
</reference>
<sequence length="382" mass="42227">MQDAAPRLTFTLRDEERLMMKIGVFVPIGNNGWLISTHAPQYMPTFELNKAIAQKAEHYHFDFALSMIKLRGFGGKTEFWDHNLESFTLMAGLAAVTSRIQIYATAATLTLPPAIVARMAATIDSISGGRFGVNLVTGWQKPEYEQMGIWPGDDYFSRRYDYLTEYVQVLRDLWGTGKSDFKGDFFTMNDCRVSPQPSIPMKVICAGQSDAGMAFSAQYADFNFCFGKGVNTPTAFAPTAARMKQATEQTGRDVGSYVLFMVIADETDDATRAKWEHYKAGADEEALSWLTEQSQKDTRSGTDTNVRQMADPTSAVNINMGTLVGSYASVARMLDEVASVPGAEGVLLTFDDFLSGIETFGERIQPLMQCRAHLSALTQEVA</sequence>
<organism>
    <name type="scientific">Shigella flexneri</name>
    <dbReference type="NCBI Taxonomy" id="623"/>
    <lineage>
        <taxon>Bacteria</taxon>
        <taxon>Pseudomonadati</taxon>
        <taxon>Pseudomonadota</taxon>
        <taxon>Gammaproteobacteria</taxon>
        <taxon>Enterobacterales</taxon>
        <taxon>Enterobacteriaceae</taxon>
        <taxon>Shigella</taxon>
    </lineage>
</organism>